<organism>
    <name type="scientific">Mycobacterium sp. (strain JLS)</name>
    <dbReference type="NCBI Taxonomy" id="164757"/>
    <lineage>
        <taxon>Bacteria</taxon>
        <taxon>Bacillati</taxon>
        <taxon>Actinomycetota</taxon>
        <taxon>Actinomycetes</taxon>
        <taxon>Mycobacteriales</taxon>
        <taxon>Mycobacteriaceae</taxon>
        <taxon>Mycobacterium</taxon>
    </lineage>
</organism>
<feature type="chain" id="PRO_1000010784" description="Elongation factor P">
    <location>
        <begin position="1"/>
        <end position="187"/>
    </location>
</feature>
<gene>
    <name evidence="1" type="primary">efp</name>
    <name type="ordered locus">Mjls_2399</name>
</gene>
<keyword id="KW-0963">Cytoplasm</keyword>
<keyword id="KW-0251">Elongation factor</keyword>
<keyword id="KW-0648">Protein biosynthesis</keyword>
<reference key="1">
    <citation type="submission" date="2007-02" db="EMBL/GenBank/DDBJ databases">
        <title>Complete sequence of Mycobacterium sp. JLS.</title>
        <authorList>
            <consortium name="US DOE Joint Genome Institute"/>
            <person name="Copeland A."/>
            <person name="Lucas S."/>
            <person name="Lapidus A."/>
            <person name="Barry K."/>
            <person name="Detter J.C."/>
            <person name="Glavina del Rio T."/>
            <person name="Hammon N."/>
            <person name="Israni S."/>
            <person name="Dalin E."/>
            <person name="Tice H."/>
            <person name="Pitluck S."/>
            <person name="Chain P."/>
            <person name="Malfatti S."/>
            <person name="Shin M."/>
            <person name="Vergez L."/>
            <person name="Schmutz J."/>
            <person name="Larimer F."/>
            <person name="Land M."/>
            <person name="Hauser L."/>
            <person name="Kyrpides N."/>
            <person name="Mikhailova N."/>
            <person name="Miller C.D."/>
            <person name="Anderson A.J."/>
            <person name="Sims R.C."/>
            <person name="Richardson P."/>
        </authorList>
    </citation>
    <scope>NUCLEOTIDE SEQUENCE [LARGE SCALE GENOMIC DNA]</scope>
    <source>
        <strain>JLS</strain>
    </source>
</reference>
<comment type="function">
    <text evidence="1">Involved in peptide bond synthesis. Stimulates efficient translation and peptide-bond synthesis on native or reconstituted 70S ribosomes in vitro. Probably functions indirectly by altering the affinity of the ribosome for aminoacyl-tRNA, thus increasing their reactivity as acceptors for peptidyl transferase.</text>
</comment>
<comment type="pathway">
    <text evidence="1">Protein biosynthesis; polypeptide chain elongation.</text>
</comment>
<comment type="subcellular location">
    <subcellularLocation>
        <location evidence="1">Cytoplasm</location>
    </subcellularLocation>
</comment>
<comment type="similarity">
    <text evidence="1">Belongs to the elongation factor P family.</text>
</comment>
<proteinExistence type="inferred from homology"/>
<dbReference type="EMBL" id="CP000580">
    <property type="protein sequence ID" value="ABN98183.1"/>
    <property type="molecule type" value="Genomic_DNA"/>
</dbReference>
<dbReference type="SMR" id="A3PZ56"/>
<dbReference type="KEGG" id="mjl:Mjls_2399"/>
<dbReference type="HOGENOM" id="CLU_074944_0_1_11"/>
<dbReference type="BioCyc" id="MSP164757:G1G8C-2418-MONOMER"/>
<dbReference type="UniPathway" id="UPA00345"/>
<dbReference type="GO" id="GO:0005737">
    <property type="term" value="C:cytoplasm"/>
    <property type="evidence" value="ECO:0007669"/>
    <property type="project" value="UniProtKB-SubCell"/>
</dbReference>
<dbReference type="GO" id="GO:0003746">
    <property type="term" value="F:translation elongation factor activity"/>
    <property type="evidence" value="ECO:0007669"/>
    <property type="project" value="UniProtKB-UniRule"/>
</dbReference>
<dbReference type="GO" id="GO:0043043">
    <property type="term" value="P:peptide biosynthetic process"/>
    <property type="evidence" value="ECO:0007669"/>
    <property type="project" value="InterPro"/>
</dbReference>
<dbReference type="CDD" id="cd04470">
    <property type="entry name" value="S1_EF-P_repeat_1"/>
    <property type="match status" value="1"/>
</dbReference>
<dbReference type="CDD" id="cd05794">
    <property type="entry name" value="S1_EF-P_repeat_2"/>
    <property type="match status" value="1"/>
</dbReference>
<dbReference type="FunFam" id="2.30.30.30:FF:000003">
    <property type="entry name" value="Elongation factor P"/>
    <property type="match status" value="1"/>
</dbReference>
<dbReference type="FunFam" id="2.40.50.140:FF:000004">
    <property type="entry name" value="Elongation factor P"/>
    <property type="match status" value="1"/>
</dbReference>
<dbReference type="FunFam" id="2.40.50.140:FF:000009">
    <property type="entry name" value="Elongation factor P"/>
    <property type="match status" value="1"/>
</dbReference>
<dbReference type="Gene3D" id="2.30.30.30">
    <property type="match status" value="1"/>
</dbReference>
<dbReference type="Gene3D" id="2.40.50.140">
    <property type="entry name" value="Nucleic acid-binding proteins"/>
    <property type="match status" value="2"/>
</dbReference>
<dbReference type="HAMAP" id="MF_00141">
    <property type="entry name" value="EF_P"/>
    <property type="match status" value="1"/>
</dbReference>
<dbReference type="InterPro" id="IPR015365">
    <property type="entry name" value="Elong-fact-P_C"/>
</dbReference>
<dbReference type="InterPro" id="IPR012340">
    <property type="entry name" value="NA-bd_OB-fold"/>
</dbReference>
<dbReference type="InterPro" id="IPR014722">
    <property type="entry name" value="Rib_uL2_dom2"/>
</dbReference>
<dbReference type="InterPro" id="IPR020599">
    <property type="entry name" value="Transl_elong_fac_P/YeiP"/>
</dbReference>
<dbReference type="InterPro" id="IPR013185">
    <property type="entry name" value="Transl_elong_KOW-like"/>
</dbReference>
<dbReference type="InterPro" id="IPR001059">
    <property type="entry name" value="Transl_elong_P/YeiP_cen"/>
</dbReference>
<dbReference type="InterPro" id="IPR013852">
    <property type="entry name" value="Transl_elong_P/YeiP_CS"/>
</dbReference>
<dbReference type="InterPro" id="IPR011768">
    <property type="entry name" value="Transl_elongation_fac_P"/>
</dbReference>
<dbReference type="InterPro" id="IPR008991">
    <property type="entry name" value="Translation_prot_SH3-like_sf"/>
</dbReference>
<dbReference type="NCBIfam" id="TIGR00038">
    <property type="entry name" value="efp"/>
    <property type="match status" value="1"/>
</dbReference>
<dbReference type="NCBIfam" id="NF001810">
    <property type="entry name" value="PRK00529.1"/>
    <property type="match status" value="1"/>
</dbReference>
<dbReference type="PANTHER" id="PTHR30053">
    <property type="entry name" value="ELONGATION FACTOR P"/>
    <property type="match status" value="1"/>
</dbReference>
<dbReference type="PANTHER" id="PTHR30053:SF12">
    <property type="entry name" value="ELONGATION FACTOR P (EF-P) FAMILY PROTEIN"/>
    <property type="match status" value="1"/>
</dbReference>
<dbReference type="Pfam" id="PF01132">
    <property type="entry name" value="EFP"/>
    <property type="match status" value="1"/>
</dbReference>
<dbReference type="Pfam" id="PF08207">
    <property type="entry name" value="EFP_N"/>
    <property type="match status" value="1"/>
</dbReference>
<dbReference type="Pfam" id="PF09285">
    <property type="entry name" value="Elong-fact-P_C"/>
    <property type="match status" value="1"/>
</dbReference>
<dbReference type="PIRSF" id="PIRSF005901">
    <property type="entry name" value="EF-P"/>
    <property type="match status" value="1"/>
</dbReference>
<dbReference type="SMART" id="SM01185">
    <property type="entry name" value="EFP"/>
    <property type="match status" value="1"/>
</dbReference>
<dbReference type="SMART" id="SM00841">
    <property type="entry name" value="Elong-fact-P_C"/>
    <property type="match status" value="1"/>
</dbReference>
<dbReference type="SUPFAM" id="SSF50249">
    <property type="entry name" value="Nucleic acid-binding proteins"/>
    <property type="match status" value="2"/>
</dbReference>
<dbReference type="SUPFAM" id="SSF50104">
    <property type="entry name" value="Translation proteins SH3-like domain"/>
    <property type="match status" value="1"/>
</dbReference>
<dbReference type="PROSITE" id="PS01275">
    <property type="entry name" value="EFP"/>
    <property type="match status" value="1"/>
</dbReference>
<name>EFP_MYCSJ</name>
<accession>A3PZ56</accession>
<protein>
    <recommendedName>
        <fullName evidence="1">Elongation factor P</fullName>
        <shortName evidence="1">EF-P</shortName>
    </recommendedName>
</protein>
<sequence length="187" mass="20433">MASTADFKNGLVLQIDGQLWQIVEFQHVKPGKGPAFVRTKLKNVVSGKVVDKTYNAGVKVETATVDRRDATYLYRDGSDFVFMDSEDYEQHPLPESLVGRAADFLLESMPVQIAFHDGVPLYLELPVTVELLVASTEPGLQGDRSSAGTKPATMETGAEIQVPLFINTGDKLKVDSRDGSYLGRVNA</sequence>
<evidence type="ECO:0000255" key="1">
    <source>
        <dbReference type="HAMAP-Rule" id="MF_00141"/>
    </source>
</evidence>